<evidence type="ECO:0000255" key="1">
    <source>
        <dbReference type="HAMAP-Rule" id="MF_01369"/>
    </source>
</evidence>
<evidence type="ECO:0000305" key="2"/>
<comment type="function">
    <text evidence="1">One of the early assembly proteins it binds 23S rRNA. One of the proteins that surrounds the polypeptide exit tunnel on the outside of the ribosome. Forms the main docking site for trigger factor binding to the ribosome.</text>
</comment>
<comment type="subunit">
    <text evidence="1">Part of the 50S ribosomal subunit. Contacts protein L29, and trigger factor when it is bound to the ribosome.</text>
</comment>
<comment type="similarity">
    <text evidence="1">Belongs to the universal ribosomal protein uL23 family.</text>
</comment>
<keyword id="KW-0687">Ribonucleoprotein</keyword>
<keyword id="KW-0689">Ribosomal protein</keyword>
<keyword id="KW-0694">RNA-binding</keyword>
<keyword id="KW-0699">rRNA-binding</keyword>
<organism>
    <name type="scientific">Coxiella burnetii (strain CbuG_Q212)</name>
    <name type="common">Coxiella burnetii (strain Q212)</name>
    <dbReference type="NCBI Taxonomy" id="434923"/>
    <lineage>
        <taxon>Bacteria</taxon>
        <taxon>Pseudomonadati</taxon>
        <taxon>Pseudomonadota</taxon>
        <taxon>Gammaproteobacteria</taxon>
        <taxon>Legionellales</taxon>
        <taxon>Coxiellaceae</taxon>
        <taxon>Coxiella</taxon>
    </lineage>
</organism>
<accession>B6J261</accession>
<feature type="chain" id="PRO_1000144559" description="Large ribosomal subunit protein uL23">
    <location>
        <begin position="1"/>
        <end position="95"/>
    </location>
</feature>
<dbReference type="EMBL" id="CP001019">
    <property type="protein sequence ID" value="ACJ19039.1"/>
    <property type="molecule type" value="Genomic_DNA"/>
</dbReference>
<dbReference type="RefSeq" id="WP_005771542.1">
    <property type="nucleotide sequence ID" value="NC_011527.1"/>
</dbReference>
<dbReference type="SMR" id="B6J261"/>
<dbReference type="KEGG" id="cbg:CbuG_1765"/>
<dbReference type="HOGENOM" id="CLU_037562_3_1_6"/>
<dbReference type="GO" id="GO:1990904">
    <property type="term" value="C:ribonucleoprotein complex"/>
    <property type="evidence" value="ECO:0007669"/>
    <property type="project" value="UniProtKB-KW"/>
</dbReference>
<dbReference type="GO" id="GO:0005840">
    <property type="term" value="C:ribosome"/>
    <property type="evidence" value="ECO:0007669"/>
    <property type="project" value="UniProtKB-KW"/>
</dbReference>
<dbReference type="GO" id="GO:0019843">
    <property type="term" value="F:rRNA binding"/>
    <property type="evidence" value="ECO:0007669"/>
    <property type="project" value="UniProtKB-UniRule"/>
</dbReference>
<dbReference type="GO" id="GO:0003735">
    <property type="term" value="F:structural constituent of ribosome"/>
    <property type="evidence" value="ECO:0007669"/>
    <property type="project" value="InterPro"/>
</dbReference>
<dbReference type="GO" id="GO:0006412">
    <property type="term" value="P:translation"/>
    <property type="evidence" value="ECO:0007669"/>
    <property type="project" value="UniProtKB-UniRule"/>
</dbReference>
<dbReference type="FunFam" id="3.30.70.330:FF:000001">
    <property type="entry name" value="50S ribosomal protein L23"/>
    <property type="match status" value="1"/>
</dbReference>
<dbReference type="Gene3D" id="3.30.70.330">
    <property type="match status" value="1"/>
</dbReference>
<dbReference type="HAMAP" id="MF_01369_B">
    <property type="entry name" value="Ribosomal_uL23_B"/>
    <property type="match status" value="1"/>
</dbReference>
<dbReference type="InterPro" id="IPR012677">
    <property type="entry name" value="Nucleotide-bd_a/b_plait_sf"/>
</dbReference>
<dbReference type="InterPro" id="IPR013025">
    <property type="entry name" value="Ribosomal_uL23-like"/>
</dbReference>
<dbReference type="InterPro" id="IPR012678">
    <property type="entry name" value="Ribosomal_uL23/eL15/eS24_sf"/>
</dbReference>
<dbReference type="NCBIfam" id="NF004359">
    <property type="entry name" value="PRK05738.1-3"/>
    <property type="match status" value="1"/>
</dbReference>
<dbReference type="NCBIfam" id="NF004363">
    <property type="entry name" value="PRK05738.2-4"/>
    <property type="match status" value="1"/>
</dbReference>
<dbReference type="PANTHER" id="PTHR11620">
    <property type="entry name" value="60S RIBOSOMAL PROTEIN L23A"/>
    <property type="match status" value="1"/>
</dbReference>
<dbReference type="Pfam" id="PF00276">
    <property type="entry name" value="Ribosomal_L23"/>
    <property type="match status" value="1"/>
</dbReference>
<dbReference type="SUPFAM" id="SSF54189">
    <property type="entry name" value="Ribosomal proteins S24e, L23 and L15e"/>
    <property type="match status" value="1"/>
</dbReference>
<proteinExistence type="inferred from homology"/>
<name>RL23_COXB2</name>
<sequence>MNEERLFKILLAPHISEKGALTTGQYVFEVMPDATKPEIKRAVEKQFNVTVKSVRTCNVKGKTTRFRQVRGRRKNWKKAYVMLAPGSEIDIAAGE</sequence>
<protein>
    <recommendedName>
        <fullName evidence="1">Large ribosomal subunit protein uL23</fullName>
    </recommendedName>
    <alternativeName>
        <fullName evidence="2">50S ribosomal protein L23</fullName>
    </alternativeName>
</protein>
<gene>
    <name evidence="1" type="primary">rplW</name>
    <name type="ordered locus">CbuG_1765</name>
</gene>
<reference key="1">
    <citation type="journal article" date="2009" name="Infect. Immun.">
        <title>Comparative genomics reveal extensive transposon-mediated genomic plasticity and diversity among potential effector proteins within the genus Coxiella.</title>
        <authorList>
            <person name="Beare P.A."/>
            <person name="Unsworth N."/>
            <person name="Andoh M."/>
            <person name="Voth D.E."/>
            <person name="Omsland A."/>
            <person name="Gilk S.D."/>
            <person name="Williams K.P."/>
            <person name="Sobral B.W."/>
            <person name="Kupko J.J. III"/>
            <person name="Porcella S.F."/>
            <person name="Samuel J.E."/>
            <person name="Heinzen R.A."/>
        </authorList>
    </citation>
    <scope>NUCLEOTIDE SEQUENCE [LARGE SCALE GENOMIC DNA]</scope>
    <source>
        <strain>CbuG_Q212</strain>
    </source>
</reference>